<organism>
    <name type="scientific">Francisella tularensis subsp. mediasiatica (strain FSC147)</name>
    <dbReference type="NCBI Taxonomy" id="441952"/>
    <lineage>
        <taxon>Bacteria</taxon>
        <taxon>Pseudomonadati</taxon>
        <taxon>Pseudomonadota</taxon>
        <taxon>Gammaproteobacteria</taxon>
        <taxon>Thiotrichales</taxon>
        <taxon>Francisellaceae</taxon>
        <taxon>Francisella</taxon>
    </lineage>
</organism>
<keyword id="KW-0067">ATP-binding</keyword>
<keyword id="KW-0119">Carbohydrate metabolism</keyword>
<keyword id="KW-0320">Glycogen biosynthesis</keyword>
<keyword id="KW-0321">Glycogen metabolism</keyword>
<keyword id="KW-0547">Nucleotide-binding</keyword>
<keyword id="KW-0548">Nucleotidyltransferase</keyword>
<keyword id="KW-0808">Transferase</keyword>
<evidence type="ECO:0000255" key="1">
    <source>
        <dbReference type="HAMAP-Rule" id="MF_00624"/>
    </source>
</evidence>
<accession>B2SFM9</accession>
<dbReference type="EC" id="2.7.7.27" evidence="1"/>
<dbReference type="EMBL" id="CP000915">
    <property type="protein sequence ID" value="ACD30572.1"/>
    <property type="molecule type" value="Genomic_DNA"/>
</dbReference>
<dbReference type="SMR" id="B2SFM9"/>
<dbReference type="KEGG" id="ftm:FTM_0571"/>
<dbReference type="HOGENOM" id="CLU_029499_14_1_6"/>
<dbReference type="UniPathway" id="UPA00164"/>
<dbReference type="GO" id="GO:0005524">
    <property type="term" value="F:ATP binding"/>
    <property type="evidence" value="ECO:0007669"/>
    <property type="project" value="UniProtKB-KW"/>
</dbReference>
<dbReference type="GO" id="GO:0008878">
    <property type="term" value="F:glucose-1-phosphate adenylyltransferase activity"/>
    <property type="evidence" value="ECO:0007669"/>
    <property type="project" value="UniProtKB-UniRule"/>
</dbReference>
<dbReference type="GO" id="GO:0005978">
    <property type="term" value="P:glycogen biosynthetic process"/>
    <property type="evidence" value="ECO:0007669"/>
    <property type="project" value="UniProtKB-UniRule"/>
</dbReference>
<dbReference type="CDD" id="cd02508">
    <property type="entry name" value="ADP_Glucose_PP"/>
    <property type="match status" value="1"/>
</dbReference>
<dbReference type="CDD" id="cd04651">
    <property type="entry name" value="LbH_G1P_AT_C"/>
    <property type="match status" value="1"/>
</dbReference>
<dbReference type="Gene3D" id="2.160.10.10">
    <property type="entry name" value="Hexapeptide repeat proteins"/>
    <property type="match status" value="1"/>
</dbReference>
<dbReference type="Gene3D" id="3.90.550.10">
    <property type="entry name" value="Spore Coat Polysaccharide Biosynthesis Protein SpsA, Chain A"/>
    <property type="match status" value="1"/>
</dbReference>
<dbReference type="HAMAP" id="MF_00624">
    <property type="entry name" value="GlgC"/>
    <property type="match status" value="1"/>
</dbReference>
<dbReference type="InterPro" id="IPR011831">
    <property type="entry name" value="ADP-Glc_PPase"/>
</dbReference>
<dbReference type="InterPro" id="IPR005836">
    <property type="entry name" value="ADP_Glu_pyroP_CS"/>
</dbReference>
<dbReference type="InterPro" id="IPR023049">
    <property type="entry name" value="GlgC_bac"/>
</dbReference>
<dbReference type="InterPro" id="IPR056818">
    <property type="entry name" value="GlmU/GlgC-like_hexapep"/>
</dbReference>
<dbReference type="InterPro" id="IPR005835">
    <property type="entry name" value="NTP_transferase_dom"/>
</dbReference>
<dbReference type="InterPro" id="IPR029044">
    <property type="entry name" value="Nucleotide-diphossugar_trans"/>
</dbReference>
<dbReference type="InterPro" id="IPR011004">
    <property type="entry name" value="Trimer_LpxA-like_sf"/>
</dbReference>
<dbReference type="NCBIfam" id="TIGR02091">
    <property type="entry name" value="glgC"/>
    <property type="match status" value="1"/>
</dbReference>
<dbReference type="NCBIfam" id="NF001947">
    <property type="entry name" value="PRK00725.1"/>
    <property type="match status" value="1"/>
</dbReference>
<dbReference type="NCBIfam" id="NF002023">
    <property type="entry name" value="PRK00844.1"/>
    <property type="match status" value="1"/>
</dbReference>
<dbReference type="PANTHER" id="PTHR43523:SF2">
    <property type="entry name" value="GLUCOSE-1-PHOSPHATE ADENYLYLTRANSFERASE"/>
    <property type="match status" value="1"/>
</dbReference>
<dbReference type="PANTHER" id="PTHR43523">
    <property type="entry name" value="GLUCOSE-1-PHOSPHATE ADENYLYLTRANSFERASE-RELATED"/>
    <property type="match status" value="1"/>
</dbReference>
<dbReference type="Pfam" id="PF24894">
    <property type="entry name" value="Hexapep_GlmU"/>
    <property type="match status" value="1"/>
</dbReference>
<dbReference type="Pfam" id="PF00483">
    <property type="entry name" value="NTP_transferase"/>
    <property type="match status" value="1"/>
</dbReference>
<dbReference type="SUPFAM" id="SSF53448">
    <property type="entry name" value="Nucleotide-diphospho-sugar transferases"/>
    <property type="match status" value="1"/>
</dbReference>
<dbReference type="SUPFAM" id="SSF51161">
    <property type="entry name" value="Trimeric LpxA-like enzymes"/>
    <property type="match status" value="1"/>
</dbReference>
<dbReference type="PROSITE" id="PS00808">
    <property type="entry name" value="ADP_GLC_PYROPHOSPH_1"/>
    <property type="match status" value="1"/>
</dbReference>
<dbReference type="PROSITE" id="PS00809">
    <property type="entry name" value="ADP_GLC_PYROPHOSPH_2"/>
    <property type="match status" value="1"/>
</dbReference>
<dbReference type="PROSITE" id="PS00810">
    <property type="entry name" value="ADP_GLC_PYROPHOSPH_3"/>
    <property type="match status" value="1"/>
</dbReference>
<protein>
    <recommendedName>
        <fullName evidence="1">Glucose-1-phosphate adenylyltransferase</fullName>
        <ecNumber evidence="1">2.7.7.27</ecNumber>
    </recommendedName>
    <alternativeName>
        <fullName evidence="1">ADP-glucose pyrophosphorylase</fullName>
        <shortName evidence="1">ADPGlc PPase</shortName>
    </alternativeName>
    <alternativeName>
        <fullName evidence="1">ADP-glucose synthase</fullName>
    </alternativeName>
</protein>
<gene>
    <name evidence="1" type="primary">glgC</name>
    <name type="ordered locus">FTM_0571</name>
</gene>
<feature type="chain" id="PRO_1000130486" description="Glucose-1-phosphate adenylyltransferase">
    <location>
        <begin position="1"/>
        <end position="423"/>
    </location>
</feature>
<feature type="binding site" evidence="1">
    <location>
        <position position="108"/>
    </location>
    <ligand>
        <name>alpha-D-glucose 1-phosphate</name>
        <dbReference type="ChEBI" id="CHEBI:58601"/>
    </ligand>
</feature>
<feature type="binding site" evidence="1">
    <location>
        <position position="173"/>
    </location>
    <ligand>
        <name>alpha-D-glucose 1-phosphate</name>
        <dbReference type="ChEBI" id="CHEBI:58601"/>
    </ligand>
</feature>
<feature type="binding site" evidence="1">
    <location>
        <begin position="188"/>
        <end position="189"/>
    </location>
    <ligand>
        <name>alpha-D-glucose 1-phosphate</name>
        <dbReference type="ChEBI" id="CHEBI:58601"/>
    </ligand>
</feature>
<feature type="binding site" evidence="1">
    <location>
        <position position="207"/>
    </location>
    <ligand>
        <name>alpha-D-glucose 1-phosphate</name>
        <dbReference type="ChEBI" id="CHEBI:58601"/>
    </ligand>
</feature>
<proteinExistence type="inferred from homology"/>
<sequence>MDNHNSSHQLYKKAMALVLAGGRGSRLYNLTDTRAKPAVYFGGKFRIIDFALSNCLNSGIRRIGVVTQYKSHSLLRHLQRGWGFLRGELNEFIDLLPAQQRVDEEHWYRGTADAVYQNIDILRSYGPEYVIVLAGDHIYKMDYSIMLRDHAQSGYKCTVGCVEIAKGEAYAFGIMGIDENRKITSFIEKPKKNAPTIPGTTDRCYASMGIYIFNSDYLYDLLEEDITNKESSHDFGKDIIPRVVSENQALAHPFSMSCVPRGEGIEPYWRDVGTIDAFWEANLDLAANMPELNIYDKDWPVWTAQEQLPPAKFVPDRNGNHGVITNTLASGGCIVLGSEISKSLMFSKVRVLAGCKIDQCVIMPEVVVGENCRLKKVVIDKGCDIPAGMVIGEDPIEDAKNFYRTDKGVVLVTKKMIDELKEK</sequence>
<name>GLGC_FRATM</name>
<comment type="function">
    <text evidence="1">Involved in the biosynthesis of ADP-glucose, a building block required for the elongation reactions to produce glycogen. Catalyzes the reaction between ATP and alpha-D-glucose 1-phosphate (G1P) to produce pyrophosphate and ADP-Glc.</text>
</comment>
<comment type="catalytic activity">
    <reaction evidence="1">
        <text>alpha-D-glucose 1-phosphate + ATP + H(+) = ADP-alpha-D-glucose + diphosphate</text>
        <dbReference type="Rhea" id="RHEA:12120"/>
        <dbReference type="ChEBI" id="CHEBI:15378"/>
        <dbReference type="ChEBI" id="CHEBI:30616"/>
        <dbReference type="ChEBI" id="CHEBI:33019"/>
        <dbReference type="ChEBI" id="CHEBI:57498"/>
        <dbReference type="ChEBI" id="CHEBI:58601"/>
        <dbReference type="EC" id="2.7.7.27"/>
    </reaction>
</comment>
<comment type="pathway">
    <text evidence="1">Glycan biosynthesis; glycogen biosynthesis.</text>
</comment>
<comment type="subunit">
    <text evidence="1">Homotetramer.</text>
</comment>
<comment type="similarity">
    <text evidence="1">Belongs to the bacterial/plant glucose-1-phosphate adenylyltransferase family.</text>
</comment>
<reference key="1">
    <citation type="journal article" date="2009" name="PLoS Pathog.">
        <title>Molecular evolutionary consequences of niche restriction in Francisella tularensis, a facultative intracellular pathogen.</title>
        <authorList>
            <person name="Larsson P."/>
            <person name="Elfsmark D."/>
            <person name="Svensson K."/>
            <person name="Wikstroem P."/>
            <person name="Forsman M."/>
            <person name="Brettin T."/>
            <person name="Keim P."/>
            <person name="Johansson A."/>
        </authorList>
    </citation>
    <scope>NUCLEOTIDE SEQUENCE [LARGE SCALE GENOMIC DNA]</scope>
    <source>
        <strain>FSC147</strain>
    </source>
</reference>